<evidence type="ECO:0000255" key="1">
    <source>
        <dbReference type="PROSITE-ProRule" id="PRU00520"/>
    </source>
</evidence>
<evidence type="ECO:0000305" key="2"/>
<sequence length="91" mass="10129">MHCLRAIVKGKVQGVYFRDFTRTQATRLGLCGYAKNLANGAEVEVVAEGDKDALLEFLNLLRSGPPRAEVKDVETGWETATANYSDFRIKH</sequence>
<accession>A5FQM9</accession>
<keyword id="KW-0378">Hydrolase</keyword>
<gene>
    <name type="primary">acyP</name>
    <name type="ordered locus">DehaBAV1_0910</name>
</gene>
<protein>
    <recommendedName>
        <fullName>Acylphosphatase</fullName>
        <ecNumber>3.6.1.7</ecNumber>
    </recommendedName>
    <alternativeName>
        <fullName>Acylphosphate phosphohydrolase</fullName>
    </alternativeName>
</protein>
<name>ACYP_DEHMB</name>
<organism>
    <name type="scientific">Dehalococcoides mccartyi (strain ATCC BAA-2100 / JCM 16839 / KCTC 5957 / BAV1)</name>
    <dbReference type="NCBI Taxonomy" id="216389"/>
    <lineage>
        <taxon>Bacteria</taxon>
        <taxon>Bacillati</taxon>
        <taxon>Chloroflexota</taxon>
        <taxon>Dehalococcoidia</taxon>
        <taxon>Dehalococcoidales</taxon>
        <taxon>Dehalococcoidaceae</taxon>
        <taxon>Dehalococcoides</taxon>
    </lineage>
</organism>
<proteinExistence type="inferred from homology"/>
<reference key="1">
    <citation type="submission" date="2007-05" db="EMBL/GenBank/DDBJ databases">
        <title>Complete sequence of Dehalococcoides sp. BAV1.</title>
        <authorList>
            <consortium name="US DOE Joint Genome Institute"/>
            <person name="Copeland A."/>
            <person name="Lucas S."/>
            <person name="Lapidus A."/>
            <person name="Barry K."/>
            <person name="Detter J.C."/>
            <person name="Glavina del Rio T."/>
            <person name="Hammon N."/>
            <person name="Israni S."/>
            <person name="Pitluck S."/>
            <person name="Lowry S."/>
            <person name="Clum A."/>
            <person name="Schmutz J."/>
            <person name="Larimer F."/>
            <person name="Land M."/>
            <person name="Hauser L."/>
            <person name="Kyrpides N."/>
            <person name="Kim E."/>
            <person name="Ritalahti K.M."/>
            <person name="Loeffler F."/>
            <person name="Richardson P."/>
        </authorList>
    </citation>
    <scope>NUCLEOTIDE SEQUENCE [LARGE SCALE GENOMIC DNA]</scope>
    <source>
        <strain>ATCC BAA-2100 / JCM 16839 / KCTC 5957 / BAV1</strain>
    </source>
</reference>
<comment type="catalytic activity">
    <reaction>
        <text>an acyl phosphate + H2O = a carboxylate + phosphate + H(+)</text>
        <dbReference type="Rhea" id="RHEA:14965"/>
        <dbReference type="ChEBI" id="CHEBI:15377"/>
        <dbReference type="ChEBI" id="CHEBI:15378"/>
        <dbReference type="ChEBI" id="CHEBI:29067"/>
        <dbReference type="ChEBI" id="CHEBI:43474"/>
        <dbReference type="ChEBI" id="CHEBI:59918"/>
        <dbReference type="EC" id="3.6.1.7"/>
    </reaction>
</comment>
<comment type="similarity">
    <text evidence="2">Belongs to the acylphosphatase family.</text>
</comment>
<feature type="chain" id="PRO_0000326697" description="Acylphosphatase">
    <location>
        <begin position="1"/>
        <end position="91"/>
    </location>
</feature>
<feature type="domain" description="Acylphosphatase-like" evidence="1">
    <location>
        <begin position="3"/>
        <end position="91"/>
    </location>
</feature>
<feature type="active site" evidence="1">
    <location>
        <position position="18"/>
    </location>
</feature>
<feature type="active site" evidence="1">
    <location>
        <position position="36"/>
    </location>
</feature>
<dbReference type="EC" id="3.6.1.7"/>
<dbReference type="EMBL" id="CP000688">
    <property type="protein sequence ID" value="ABQ17492.1"/>
    <property type="molecule type" value="Genomic_DNA"/>
</dbReference>
<dbReference type="SMR" id="A5FQM9"/>
<dbReference type="KEGG" id="deb:DehaBAV1_0910"/>
<dbReference type="PATRIC" id="fig|216389.18.peg.963"/>
<dbReference type="HOGENOM" id="CLU_141932_1_0_0"/>
<dbReference type="GO" id="GO:0003998">
    <property type="term" value="F:acylphosphatase activity"/>
    <property type="evidence" value="ECO:0007669"/>
    <property type="project" value="UniProtKB-EC"/>
</dbReference>
<dbReference type="Gene3D" id="3.30.70.100">
    <property type="match status" value="1"/>
</dbReference>
<dbReference type="InterPro" id="IPR001792">
    <property type="entry name" value="Acylphosphatase-like_dom"/>
</dbReference>
<dbReference type="InterPro" id="IPR036046">
    <property type="entry name" value="Acylphosphatase-like_dom_sf"/>
</dbReference>
<dbReference type="InterPro" id="IPR017968">
    <property type="entry name" value="Acylphosphatase_CS"/>
</dbReference>
<dbReference type="NCBIfam" id="NF011021">
    <property type="entry name" value="PRK14450.1"/>
    <property type="match status" value="1"/>
</dbReference>
<dbReference type="Pfam" id="PF00708">
    <property type="entry name" value="Acylphosphatase"/>
    <property type="match status" value="1"/>
</dbReference>
<dbReference type="SUPFAM" id="SSF54975">
    <property type="entry name" value="Acylphosphatase/BLUF domain-like"/>
    <property type="match status" value="1"/>
</dbReference>
<dbReference type="PROSITE" id="PS00150">
    <property type="entry name" value="ACYLPHOSPHATASE_1"/>
    <property type="match status" value="1"/>
</dbReference>
<dbReference type="PROSITE" id="PS51160">
    <property type="entry name" value="ACYLPHOSPHATASE_3"/>
    <property type="match status" value="1"/>
</dbReference>